<reference key="1">
    <citation type="journal article" date="2001" name="Nature">
        <title>Complete genome sequence of a multiple drug resistant Salmonella enterica serovar Typhi CT18.</title>
        <authorList>
            <person name="Parkhill J."/>
            <person name="Dougan G."/>
            <person name="James K.D."/>
            <person name="Thomson N.R."/>
            <person name="Pickard D."/>
            <person name="Wain J."/>
            <person name="Churcher C.M."/>
            <person name="Mungall K.L."/>
            <person name="Bentley S.D."/>
            <person name="Holden M.T.G."/>
            <person name="Sebaihia M."/>
            <person name="Baker S."/>
            <person name="Basham D."/>
            <person name="Brooks K."/>
            <person name="Chillingworth T."/>
            <person name="Connerton P."/>
            <person name="Cronin A."/>
            <person name="Davis P."/>
            <person name="Davies R.M."/>
            <person name="Dowd L."/>
            <person name="White N."/>
            <person name="Farrar J."/>
            <person name="Feltwell T."/>
            <person name="Hamlin N."/>
            <person name="Haque A."/>
            <person name="Hien T.T."/>
            <person name="Holroyd S."/>
            <person name="Jagels K."/>
            <person name="Krogh A."/>
            <person name="Larsen T.S."/>
            <person name="Leather S."/>
            <person name="Moule S."/>
            <person name="O'Gaora P."/>
            <person name="Parry C."/>
            <person name="Quail M.A."/>
            <person name="Rutherford K.M."/>
            <person name="Simmonds M."/>
            <person name="Skelton J."/>
            <person name="Stevens K."/>
            <person name="Whitehead S."/>
            <person name="Barrell B.G."/>
        </authorList>
    </citation>
    <scope>NUCLEOTIDE SEQUENCE [LARGE SCALE GENOMIC DNA]</scope>
    <source>
        <strain>CT18</strain>
    </source>
</reference>
<reference key="2">
    <citation type="journal article" date="2003" name="J. Bacteriol.">
        <title>Comparative genomics of Salmonella enterica serovar Typhi strains Ty2 and CT18.</title>
        <authorList>
            <person name="Deng W."/>
            <person name="Liou S.-R."/>
            <person name="Plunkett G. III"/>
            <person name="Mayhew G.F."/>
            <person name="Rose D.J."/>
            <person name="Burland V."/>
            <person name="Kodoyianni V."/>
            <person name="Schwartz D.C."/>
            <person name="Blattner F.R."/>
        </authorList>
    </citation>
    <scope>NUCLEOTIDE SEQUENCE [LARGE SCALE GENOMIC DNA]</scope>
    <source>
        <strain>ATCC 700931 / Ty2</strain>
    </source>
</reference>
<feature type="chain" id="PRO_0000149868" description="Diaminopimelate epimerase">
    <location>
        <begin position="1"/>
        <end position="274"/>
    </location>
</feature>
<feature type="active site" description="Proton donor" evidence="1">
    <location>
        <position position="73"/>
    </location>
</feature>
<feature type="active site" description="Proton acceptor" evidence="1">
    <location>
        <position position="217"/>
    </location>
</feature>
<feature type="binding site" evidence="1">
    <location>
        <position position="11"/>
    </location>
    <ligand>
        <name>substrate</name>
    </ligand>
</feature>
<feature type="binding site" evidence="1">
    <location>
        <position position="44"/>
    </location>
    <ligand>
        <name>substrate</name>
    </ligand>
</feature>
<feature type="binding site" evidence="1">
    <location>
        <position position="64"/>
    </location>
    <ligand>
        <name>substrate</name>
    </ligand>
</feature>
<feature type="binding site" evidence="1">
    <location>
        <begin position="74"/>
        <end position="75"/>
    </location>
    <ligand>
        <name>substrate</name>
    </ligand>
</feature>
<feature type="binding site" evidence="1">
    <location>
        <position position="157"/>
    </location>
    <ligand>
        <name>substrate</name>
    </ligand>
</feature>
<feature type="binding site" evidence="1">
    <location>
        <position position="190"/>
    </location>
    <ligand>
        <name>substrate</name>
    </ligand>
</feature>
<feature type="binding site" evidence="1">
    <location>
        <begin position="208"/>
        <end position="209"/>
    </location>
    <ligand>
        <name>substrate</name>
    </ligand>
</feature>
<feature type="binding site" evidence="1">
    <location>
        <begin position="218"/>
        <end position="219"/>
    </location>
    <ligand>
        <name>substrate</name>
    </ligand>
</feature>
<feature type="site" description="Could be important to modulate the pK values of the two catalytic cysteine residues" evidence="1">
    <location>
        <position position="159"/>
    </location>
</feature>
<feature type="site" description="Could be important to modulate the pK values of the two catalytic cysteine residues" evidence="1">
    <location>
        <position position="208"/>
    </location>
</feature>
<feature type="site" description="Important for dimerization" evidence="1">
    <location>
        <position position="268"/>
    </location>
</feature>
<dbReference type="EC" id="5.1.1.7" evidence="1"/>
<dbReference type="EMBL" id="AL513382">
    <property type="protein sequence ID" value="CAD09373.1"/>
    <property type="molecule type" value="Genomic_DNA"/>
</dbReference>
<dbReference type="EMBL" id="AE014613">
    <property type="protein sequence ID" value="AAO70878.1"/>
    <property type="molecule type" value="Genomic_DNA"/>
</dbReference>
<dbReference type="RefSeq" id="NP_457804.1">
    <property type="nucleotide sequence ID" value="NC_003198.1"/>
</dbReference>
<dbReference type="RefSeq" id="WP_001160671.1">
    <property type="nucleotide sequence ID" value="NZ_WSUR01000033.1"/>
</dbReference>
<dbReference type="SMR" id="P0A1F3"/>
<dbReference type="STRING" id="220341.gene:17587464"/>
<dbReference type="KEGG" id="stt:t3350"/>
<dbReference type="KEGG" id="sty:STY3612"/>
<dbReference type="PATRIC" id="fig|220341.7.peg.3681"/>
<dbReference type="eggNOG" id="COG0253">
    <property type="taxonomic scope" value="Bacteria"/>
</dbReference>
<dbReference type="HOGENOM" id="CLU_053306_1_1_6"/>
<dbReference type="OMA" id="GIRCFAR"/>
<dbReference type="OrthoDB" id="9805408at2"/>
<dbReference type="UniPathway" id="UPA00034">
    <property type="reaction ID" value="UER00025"/>
</dbReference>
<dbReference type="Proteomes" id="UP000000541">
    <property type="component" value="Chromosome"/>
</dbReference>
<dbReference type="Proteomes" id="UP000002670">
    <property type="component" value="Chromosome"/>
</dbReference>
<dbReference type="GO" id="GO:0005829">
    <property type="term" value="C:cytosol"/>
    <property type="evidence" value="ECO:0007669"/>
    <property type="project" value="TreeGrafter"/>
</dbReference>
<dbReference type="GO" id="GO:0008837">
    <property type="term" value="F:diaminopimelate epimerase activity"/>
    <property type="evidence" value="ECO:0007669"/>
    <property type="project" value="UniProtKB-UniRule"/>
</dbReference>
<dbReference type="GO" id="GO:0009089">
    <property type="term" value="P:lysine biosynthetic process via diaminopimelate"/>
    <property type="evidence" value="ECO:0007669"/>
    <property type="project" value="UniProtKB-UniRule"/>
</dbReference>
<dbReference type="FunFam" id="3.10.310.10:FF:000001">
    <property type="entry name" value="Diaminopimelate epimerase"/>
    <property type="match status" value="1"/>
</dbReference>
<dbReference type="FunFam" id="3.10.310.10:FF:000002">
    <property type="entry name" value="Diaminopimelate epimerase"/>
    <property type="match status" value="1"/>
</dbReference>
<dbReference type="Gene3D" id="3.10.310.10">
    <property type="entry name" value="Diaminopimelate Epimerase, Chain A, domain 1"/>
    <property type="match status" value="2"/>
</dbReference>
<dbReference type="HAMAP" id="MF_00197">
    <property type="entry name" value="DAP_epimerase"/>
    <property type="match status" value="1"/>
</dbReference>
<dbReference type="InterPro" id="IPR018510">
    <property type="entry name" value="DAP_epimerase_AS"/>
</dbReference>
<dbReference type="InterPro" id="IPR001653">
    <property type="entry name" value="DAP_epimerase_DapF"/>
</dbReference>
<dbReference type="NCBIfam" id="TIGR00652">
    <property type="entry name" value="DapF"/>
    <property type="match status" value="1"/>
</dbReference>
<dbReference type="PANTHER" id="PTHR31689:SF0">
    <property type="entry name" value="DIAMINOPIMELATE EPIMERASE"/>
    <property type="match status" value="1"/>
</dbReference>
<dbReference type="PANTHER" id="PTHR31689">
    <property type="entry name" value="DIAMINOPIMELATE EPIMERASE, CHLOROPLASTIC"/>
    <property type="match status" value="1"/>
</dbReference>
<dbReference type="Pfam" id="PF01678">
    <property type="entry name" value="DAP_epimerase"/>
    <property type="match status" value="2"/>
</dbReference>
<dbReference type="SUPFAM" id="SSF54506">
    <property type="entry name" value="Diaminopimelate epimerase-like"/>
    <property type="match status" value="1"/>
</dbReference>
<dbReference type="PROSITE" id="PS01326">
    <property type="entry name" value="DAP_EPIMERASE"/>
    <property type="match status" value="1"/>
</dbReference>
<sequence length="274" mass="30337">MQFSKMHGLGNDFMVVDAVTQNVFFSPELIRRLSDRHLGVGFDQLLVVEPPYDPELDFHYRIFNADGSEVSQCGNGARCFARFVRLKGLTNKRDIRVSTANGRMVLSVTEDELVRVNMGEPNFEPAQVPFRANKAEKTYIMRAAEQTILCGVVSMGNPHCVIQVDNVDTAAVETLGPVLESHERFPERANIGFMQVVRREHIRLRVYERGAGETRACGSGACAAVAVGIQQGLLAEEVRVELPGGRLDIAWKGPGHPLYMTGPAAHIYDGFIHL</sequence>
<accession>P0A1F3</accession>
<accession>Q9L6P6</accession>
<comment type="function">
    <text evidence="1">Catalyzes the stereoinversion of LL-2,6-diaminopimelate (L,L-DAP) to meso-diaminopimelate (meso-DAP), a precursor of L-lysine and an essential component of the bacterial peptidoglycan.</text>
</comment>
<comment type="catalytic activity">
    <reaction evidence="1">
        <text>(2S,6S)-2,6-diaminopimelate = meso-2,6-diaminopimelate</text>
        <dbReference type="Rhea" id="RHEA:15393"/>
        <dbReference type="ChEBI" id="CHEBI:57609"/>
        <dbReference type="ChEBI" id="CHEBI:57791"/>
        <dbReference type="EC" id="5.1.1.7"/>
    </reaction>
</comment>
<comment type="pathway">
    <text evidence="1">Amino-acid biosynthesis; L-lysine biosynthesis via DAP pathway; DL-2,6-diaminopimelate from LL-2,6-diaminopimelate: step 1/1.</text>
</comment>
<comment type="subunit">
    <text evidence="1">Homodimer.</text>
</comment>
<comment type="subcellular location">
    <subcellularLocation>
        <location evidence="1">Cytoplasm</location>
    </subcellularLocation>
</comment>
<comment type="similarity">
    <text evidence="1">Belongs to the diaminopimelate epimerase family.</text>
</comment>
<proteinExistence type="inferred from homology"/>
<evidence type="ECO:0000255" key="1">
    <source>
        <dbReference type="HAMAP-Rule" id="MF_00197"/>
    </source>
</evidence>
<gene>
    <name evidence="1" type="primary">dapF</name>
    <name type="ordered locus">STY3612</name>
    <name type="ordered locus">t3350</name>
</gene>
<organism>
    <name type="scientific">Salmonella typhi</name>
    <dbReference type="NCBI Taxonomy" id="90370"/>
    <lineage>
        <taxon>Bacteria</taxon>
        <taxon>Pseudomonadati</taxon>
        <taxon>Pseudomonadota</taxon>
        <taxon>Gammaproteobacteria</taxon>
        <taxon>Enterobacterales</taxon>
        <taxon>Enterobacteriaceae</taxon>
        <taxon>Salmonella</taxon>
    </lineage>
</organism>
<protein>
    <recommendedName>
        <fullName evidence="1">Diaminopimelate epimerase</fullName>
        <shortName evidence="1">DAP epimerase</shortName>
        <ecNumber evidence="1">5.1.1.7</ecNumber>
    </recommendedName>
    <alternativeName>
        <fullName evidence="1">PLP-independent amino acid racemase</fullName>
    </alternativeName>
</protein>
<keyword id="KW-0028">Amino-acid biosynthesis</keyword>
<keyword id="KW-0963">Cytoplasm</keyword>
<keyword id="KW-0413">Isomerase</keyword>
<keyword id="KW-0457">Lysine biosynthesis</keyword>
<name>DAPF_SALTI</name>